<sequence>MKDLGAKHLAGGEGVQLFGLLNFYLEQEQRYQPREKGLILMEATPENDNTLCSRLRNAKVEDLRSLTNFFGSGTETFVLAVNILDRFLALMKVKPKHLSCIGVCCFLLAARLAEEEGDVPPTHDVIRISQCKCTASDIKRMEKIISEKLHYELEATTALNFLHLYHAIVFCHTSERKEILSLDKLEAQLKACNCRVVFSKARPSVLALCLLNLEIETIKSVELLEILLLVKKHLKLSDTEFFYWRELVSKCLAEYSSPRCCKPDLKKLVWIVSRRTAQNLHSSYYSVPELPTIPEGGCFDGSESEDSGEDMSCGEESLSSSPPSDQECTFFFDFQVAQTLCFPP</sequence>
<feature type="chain" id="PRO_0000080470" description="Cyclin-G2">
    <location>
        <begin position="1"/>
        <end position="344"/>
    </location>
</feature>
<feature type="region of interest" description="Disordered" evidence="1">
    <location>
        <begin position="298"/>
        <end position="324"/>
    </location>
</feature>
<feature type="compositionally biased region" description="Acidic residues" evidence="1">
    <location>
        <begin position="302"/>
        <end position="313"/>
    </location>
</feature>
<proteinExistence type="evidence at transcript level"/>
<accession>O08918</accession>
<accession>O35612</accession>
<protein>
    <recommendedName>
        <fullName>Cyclin-G2</fullName>
    </recommendedName>
</protein>
<evidence type="ECO:0000256" key="1">
    <source>
        <dbReference type="SAM" id="MobiDB-lite"/>
    </source>
</evidence>
<evidence type="ECO:0000305" key="2"/>
<comment type="function">
    <text>May play a role in growth regulation and in negative regulation of cell cycle progression.</text>
</comment>
<comment type="subcellular location">
    <subcellularLocation>
        <location>Cytoplasm</location>
    </subcellularLocation>
    <subcellularLocation>
        <location>Nucleus</location>
    </subcellularLocation>
    <text>Primarily found in the cytoplasm. A minor portion can be detected in some cells in the nucleus.</text>
</comment>
<comment type="tissue specificity">
    <text>Highest levels in intestine. Intermediate levels in spleen, brain and kidney. Low levels in testis, stomach, pancreas, liver, salivary gland and muscle. According to PubMed:9139721 also abundant in thymus.</text>
</comment>
<comment type="developmental stage">
    <text>Expression levels oscillate moderately through the cell cycle.</text>
</comment>
<comment type="induction">
    <text>Activated in B-cells by agents causing growth inhibition or growth arrest.</text>
</comment>
<comment type="similarity">
    <text evidence="2">Belongs to the cyclin family. Cyclin G subfamily.</text>
</comment>
<dbReference type="EMBL" id="U95826">
    <property type="protein sequence ID" value="AAB58693.1"/>
    <property type="molecule type" value="mRNA"/>
</dbReference>
<dbReference type="EMBL" id="AF005885">
    <property type="protein sequence ID" value="AAC28496.1"/>
    <property type="molecule type" value="mRNA"/>
</dbReference>
<dbReference type="EMBL" id="AF079877">
    <property type="protein sequence ID" value="AAC32372.1"/>
    <property type="molecule type" value="Genomic_DNA"/>
</dbReference>
<dbReference type="EMBL" id="AB035264">
    <property type="protein sequence ID" value="BAA87065.1"/>
    <property type="molecule type" value="Genomic_DNA"/>
</dbReference>
<dbReference type="CCDS" id="CCDS19437.1"/>
<dbReference type="RefSeq" id="NP_031661.3">
    <property type="nucleotide sequence ID" value="NM_007635.4"/>
</dbReference>
<dbReference type="SMR" id="O08918"/>
<dbReference type="DIP" id="DIP-24180N"/>
<dbReference type="FunCoup" id="O08918">
    <property type="interactions" value="3181"/>
</dbReference>
<dbReference type="STRING" id="10090.ENSMUSP00000031331"/>
<dbReference type="iPTMnet" id="O08918"/>
<dbReference type="PhosphoSitePlus" id="O08918"/>
<dbReference type="PaxDb" id="10090-ENSMUSP00000031331"/>
<dbReference type="Antibodypedia" id="13540">
    <property type="antibodies" value="136 antibodies from 27 providers"/>
</dbReference>
<dbReference type="DNASU" id="12452"/>
<dbReference type="Ensembl" id="ENSMUST00000031331.13">
    <property type="protein sequence ID" value="ENSMUSP00000031331.7"/>
    <property type="gene ID" value="ENSMUSG00000029385.15"/>
</dbReference>
<dbReference type="Ensembl" id="ENSMUST00000121127.2">
    <property type="protein sequence ID" value="ENSMUSP00000113278.2"/>
    <property type="gene ID" value="ENSMUSG00000029385.15"/>
</dbReference>
<dbReference type="GeneID" id="12452"/>
<dbReference type="KEGG" id="mmu:12452"/>
<dbReference type="UCSC" id="uc008yee.2">
    <property type="organism name" value="mouse"/>
</dbReference>
<dbReference type="AGR" id="MGI:1095734"/>
<dbReference type="CTD" id="901"/>
<dbReference type="MGI" id="MGI:1095734">
    <property type="gene designation" value="Ccng2"/>
</dbReference>
<dbReference type="VEuPathDB" id="HostDB:ENSMUSG00000029385"/>
<dbReference type="eggNOG" id="KOG0653">
    <property type="taxonomic scope" value="Eukaryota"/>
</dbReference>
<dbReference type="GeneTree" id="ENSGT00940000156423"/>
<dbReference type="HOGENOM" id="CLU_062642_0_1_1"/>
<dbReference type="InParanoid" id="O08918"/>
<dbReference type="OMA" id="QEWKYQP"/>
<dbReference type="OrthoDB" id="769138at2759"/>
<dbReference type="PhylomeDB" id="O08918"/>
<dbReference type="TreeFam" id="TF101007"/>
<dbReference type="BioGRID-ORCS" id="12452">
    <property type="hits" value="1 hit in 77 CRISPR screens"/>
</dbReference>
<dbReference type="ChiTaRS" id="Ccng2">
    <property type="organism name" value="mouse"/>
</dbReference>
<dbReference type="PRO" id="PR:O08918"/>
<dbReference type="Proteomes" id="UP000000589">
    <property type="component" value="Chromosome 5"/>
</dbReference>
<dbReference type="RNAct" id="O08918">
    <property type="molecule type" value="protein"/>
</dbReference>
<dbReference type="Bgee" id="ENSMUSG00000029385">
    <property type="expression patterns" value="Expressed in medial ganglionic eminence and 262 other cell types or tissues"/>
</dbReference>
<dbReference type="ExpressionAtlas" id="O08918">
    <property type="expression patterns" value="baseline and differential"/>
</dbReference>
<dbReference type="GO" id="GO:0005829">
    <property type="term" value="C:cytosol"/>
    <property type="evidence" value="ECO:0000304"/>
    <property type="project" value="Reactome"/>
</dbReference>
<dbReference type="GO" id="GO:0005634">
    <property type="term" value="C:nucleus"/>
    <property type="evidence" value="ECO:0007669"/>
    <property type="project" value="UniProtKB-SubCell"/>
</dbReference>
<dbReference type="GO" id="GO:0051301">
    <property type="term" value="P:cell division"/>
    <property type="evidence" value="ECO:0007669"/>
    <property type="project" value="UniProtKB-KW"/>
</dbReference>
<dbReference type="GO" id="GO:0051726">
    <property type="term" value="P:regulation of cell cycle"/>
    <property type="evidence" value="ECO:0000314"/>
    <property type="project" value="MGI"/>
</dbReference>
<dbReference type="FunFam" id="1.10.472.10:FF:000056">
    <property type="entry name" value="Cyclin G2"/>
    <property type="match status" value="1"/>
</dbReference>
<dbReference type="FunFam" id="1.10.472.10:FF:000006">
    <property type="entry name" value="Cyclin I"/>
    <property type="match status" value="1"/>
</dbReference>
<dbReference type="Gene3D" id="1.10.472.10">
    <property type="entry name" value="Cyclin-like"/>
    <property type="match status" value="2"/>
</dbReference>
<dbReference type="InterPro" id="IPR039361">
    <property type="entry name" value="Cyclin"/>
</dbReference>
<dbReference type="InterPro" id="IPR013763">
    <property type="entry name" value="Cyclin-like_dom"/>
</dbReference>
<dbReference type="InterPro" id="IPR036915">
    <property type="entry name" value="Cyclin-like_sf"/>
</dbReference>
<dbReference type="InterPro" id="IPR006671">
    <property type="entry name" value="Cyclin_N"/>
</dbReference>
<dbReference type="PANTHER" id="PTHR10177">
    <property type="entry name" value="CYCLINS"/>
    <property type="match status" value="1"/>
</dbReference>
<dbReference type="Pfam" id="PF00134">
    <property type="entry name" value="Cyclin_N"/>
    <property type="match status" value="1"/>
</dbReference>
<dbReference type="SMART" id="SM00385">
    <property type="entry name" value="CYCLIN"/>
    <property type="match status" value="1"/>
</dbReference>
<dbReference type="SUPFAM" id="SSF47954">
    <property type="entry name" value="Cyclin-like"/>
    <property type="match status" value="1"/>
</dbReference>
<keyword id="KW-0131">Cell cycle</keyword>
<keyword id="KW-0132">Cell division</keyword>
<keyword id="KW-0195">Cyclin</keyword>
<keyword id="KW-0963">Cytoplasm</keyword>
<keyword id="KW-0498">Mitosis</keyword>
<keyword id="KW-0539">Nucleus</keyword>
<keyword id="KW-1185">Reference proteome</keyword>
<organism>
    <name type="scientific">Mus musculus</name>
    <name type="common">Mouse</name>
    <dbReference type="NCBI Taxonomy" id="10090"/>
    <lineage>
        <taxon>Eukaryota</taxon>
        <taxon>Metazoa</taxon>
        <taxon>Chordata</taxon>
        <taxon>Craniata</taxon>
        <taxon>Vertebrata</taxon>
        <taxon>Euteleostomi</taxon>
        <taxon>Mammalia</taxon>
        <taxon>Eutheria</taxon>
        <taxon>Euarchontoglires</taxon>
        <taxon>Glires</taxon>
        <taxon>Rodentia</taxon>
        <taxon>Myomorpha</taxon>
        <taxon>Muroidea</taxon>
        <taxon>Muridae</taxon>
        <taxon>Murinae</taxon>
        <taxon>Mus</taxon>
        <taxon>Mus</taxon>
    </lineage>
</organism>
<gene>
    <name type="primary">Ccng2</name>
</gene>
<reference key="1">
    <citation type="journal article" date="1997" name="J. Biol. Chem.">
        <title>Cyclin G2 is up-regulated during growth inhibition and B cell antigen receptor-mediated cell cycle arrest.</title>
        <authorList>
            <person name="Horne M.C."/>
            <person name="Donaldson K.L."/>
            <person name="Goolsby G.L."/>
            <person name="Tran D."/>
            <person name="Mulheisen M."/>
            <person name="Hell J.W."/>
            <person name="Wahl A.F."/>
        </authorList>
    </citation>
    <scope>NUCLEOTIDE SEQUENCE [MRNA]</scope>
    <source>
        <tissue>Thymus</tissue>
    </source>
</reference>
<reference key="2">
    <citation type="journal article" date="1999" name="Gene">
        <title>Gene structure and chromosomal localization of mouse cyclin G2 (Ccng2).</title>
        <authorList>
            <person name="Jensen M.R."/>
            <person name="Audolfsson T."/>
            <person name="Keck C.L."/>
            <person name="Zimonjic D.B."/>
            <person name="Thorgeirsson S.S."/>
        </authorList>
    </citation>
    <scope>NUCLEOTIDE SEQUENCE [GENOMIC DNA / MRNA]</scope>
    <source>
        <strain>BALB/cJ</strain>
        <tissue>Liver</tissue>
    </source>
</reference>
<reference key="3">
    <citation type="submission" date="1999-11" db="EMBL/GenBank/DDBJ databases">
        <title>Genomic structure, chromosomal mapping and p53-independent induction of mouse cyclin G2 gene.</title>
        <authorList>
            <person name="Kimura S.H."/>
            <person name="Nojima H."/>
        </authorList>
    </citation>
    <scope>NUCLEOTIDE SEQUENCE</scope>
</reference>
<name>CCNG2_MOUSE</name>